<keyword id="KW-1003">Cell membrane</keyword>
<keyword id="KW-0221">Differentiation</keyword>
<keyword id="KW-0472">Membrane</keyword>
<keyword id="KW-0896">Oogenesis</keyword>
<keyword id="KW-1185">Reference proteome</keyword>
<keyword id="KW-0812">Transmembrane</keyword>
<keyword id="KW-1133">Transmembrane helix</keyword>
<name>LILI_DROME</name>
<organism evidence="10">
    <name type="scientific">Drosophila melanogaster</name>
    <name type="common">Fruit fly</name>
    <dbReference type="NCBI Taxonomy" id="7227"/>
    <lineage>
        <taxon>Eukaryota</taxon>
        <taxon>Metazoa</taxon>
        <taxon>Ecdysozoa</taxon>
        <taxon>Arthropoda</taxon>
        <taxon>Hexapoda</taxon>
        <taxon>Insecta</taxon>
        <taxon>Pterygota</taxon>
        <taxon>Neoptera</taxon>
        <taxon>Endopterygota</taxon>
        <taxon>Diptera</taxon>
        <taxon>Brachycera</taxon>
        <taxon>Muscomorpha</taxon>
        <taxon>Ephydroidea</taxon>
        <taxon>Drosophilidae</taxon>
        <taxon>Drosophila</taxon>
        <taxon>Sophophora</taxon>
    </lineage>
</organism>
<proteinExistence type="evidence at transcript level"/>
<sequence length="527" mass="59993">MDEEEEEEVTDLKLQLFHNTVREHIIFLLLIILLYSSSYVVVSRFRRRDRDDLYSNDEDEVLVYRISFWLCTFTLAVAEGAAMLLPVSIASNEVLLLYPNSYYVKWLNSSLIQGLWNHVFLFSNLSLFIFLPFVYLFSESTGFVGNKKGILPRVYETFTVFMLMAIIVLVLTAVLSAVFGIEKLQFFWFLNLGSVHLPFLYSCVSFLGVMLMLICTPYGFVRLFGVVNQVLVRPMLLRDVNEEFSAFYMEEASVKRKLAHIELHNVSIADAANGGRLGNRIGLGRGRTFYPQPLLQHSQAHLYQRKAMASDVDELNDRLRELDSERKELDKLRTSSTFQRTFVYPLAMLLLLFCTAVTILLVVQNTLELLIGIKALPLSTRQFALGISSLSKLGPFGAGLEVCLIFYLGATSVVGFYSMPFMRKVCPKRRQTSLPQLMLNCGFMLVLSSALPLLSRIIGITNFDLLGDFGAIEWLGNFQIVLLYNLVFGTTTALCLANKFTATVRRELRARLVENYVLFTNYISFIN</sequence>
<gene>
    <name evidence="3" type="primary">lili</name>
    <name evidence="9" type="ORF">CG5807</name>
</gene>
<protein>
    <recommendedName>
        <fullName evidence="3">Protein Lilipod</fullName>
    </recommendedName>
</protein>
<reference evidence="10" key="1">
    <citation type="journal article" date="2000" name="Science">
        <title>The genome sequence of Drosophila melanogaster.</title>
        <authorList>
            <person name="Adams M.D."/>
            <person name="Celniker S.E."/>
            <person name="Holt R.A."/>
            <person name="Evans C.A."/>
            <person name="Gocayne J.D."/>
            <person name="Amanatides P.G."/>
            <person name="Scherer S.E."/>
            <person name="Li P.W."/>
            <person name="Hoskins R.A."/>
            <person name="Galle R.F."/>
            <person name="George R.A."/>
            <person name="Lewis S.E."/>
            <person name="Richards S."/>
            <person name="Ashburner M."/>
            <person name="Henderson S.N."/>
            <person name="Sutton G.G."/>
            <person name="Wortman J.R."/>
            <person name="Yandell M.D."/>
            <person name="Zhang Q."/>
            <person name="Chen L.X."/>
            <person name="Brandon R.C."/>
            <person name="Rogers Y.-H.C."/>
            <person name="Blazej R.G."/>
            <person name="Champe M."/>
            <person name="Pfeiffer B.D."/>
            <person name="Wan K.H."/>
            <person name="Doyle C."/>
            <person name="Baxter E.G."/>
            <person name="Helt G."/>
            <person name="Nelson C.R."/>
            <person name="Miklos G.L.G."/>
            <person name="Abril J.F."/>
            <person name="Agbayani A."/>
            <person name="An H.-J."/>
            <person name="Andrews-Pfannkoch C."/>
            <person name="Baldwin D."/>
            <person name="Ballew R.M."/>
            <person name="Basu A."/>
            <person name="Baxendale J."/>
            <person name="Bayraktaroglu L."/>
            <person name="Beasley E.M."/>
            <person name="Beeson K.Y."/>
            <person name="Benos P.V."/>
            <person name="Berman B.P."/>
            <person name="Bhandari D."/>
            <person name="Bolshakov S."/>
            <person name="Borkova D."/>
            <person name="Botchan M.R."/>
            <person name="Bouck J."/>
            <person name="Brokstein P."/>
            <person name="Brottier P."/>
            <person name="Burtis K.C."/>
            <person name="Busam D.A."/>
            <person name="Butler H."/>
            <person name="Cadieu E."/>
            <person name="Center A."/>
            <person name="Chandra I."/>
            <person name="Cherry J.M."/>
            <person name="Cawley S."/>
            <person name="Dahlke C."/>
            <person name="Davenport L.B."/>
            <person name="Davies P."/>
            <person name="de Pablos B."/>
            <person name="Delcher A."/>
            <person name="Deng Z."/>
            <person name="Mays A.D."/>
            <person name="Dew I."/>
            <person name="Dietz S.M."/>
            <person name="Dodson K."/>
            <person name="Doup L.E."/>
            <person name="Downes M."/>
            <person name="Dugan-Rocha S."/>
            <person name="Dunkov B.C."/>
            <person name="Dunn P."/>
            <person name="Durbin K.J."/>
            <person name="Evangelista C.C."/>
            <person name="Ferraz C."/>
            <person name="Ferriera S."/>
            <person name="Fleischmann W."/>
            <person name="Fosler C."/>
            <person name="Gabrielian A.E."/>
            <person name="Garg N.S."/>
            <person name="Gelbart W.M."/>
            <person name="Glasser K."/>
            <person name="Glodek A."/>
            <person name="Gong F."/>
            <person name="Gorrell J.H."/>
            <person name="Gu Z."/>
            <person name="Guan P."/>
            <person name="Harris M."/>
            <person name="Harris N.L."/>
            <person name="Harvey D.A."/>
            <person name="Heiman T.J."/>
            <person name="Hernandez J.R."/>
            <person name="Houck J."/>
            <person name="Hostin D."/>
            <person name="Houston K.A."/>
            <person name="Howland T.J."/>
            <person name="Wei M.-H."/>
            <person name="Ibegwam C."/>
            <person name="Jalali M."/>
            <person name="Kalush F."/>
            <person name="Karpen G.H."/>
            <person name="Ke Z."/>
            <person name="Kennison J.A."/>
            <person name="Ketchum K.A."/>
            <person name="Kimmel B.E."/>
            <person name="Kodira C.D."/>
            <person name="Kraft C.L."/>
            <person name="Kravitz S."/>
            <person name="Kulp D."/>
            <person name="Lai Z."/>
            <person name="Lasko P."/>
            <person name="Lei Y."/>
            <person name="Levitsky A.A."/>
            <person name="Li J.H."/>
            <person name="Li Z."/>
            <person name="Liang Y."/>
            <person name="Lin X."/>
            <person name="Liu X."/>
            <person name="Mattei B."/>
            <person name="McIntosh T.C."/>
            <person name="McLeod M.P."/>
            <person name="McPherson D."/>
            <person name="Merkulov G."/>
            <person name="Milshina N.V."/>
            <person name="Mobarry C."/>
            <person name="Morris J."/>
            <person name="Moshrefi A."/>
            <person name="Mount S.M."/>
            <person name="Moy M."/>
            <person name="Murphy B."/>
            <person name="Murphy L."/>
            <person name="Muzny D.M."/>
            <person name="Nelson D.L."/>
            <person name="Nelson D.R."/>
            <person name="Nelson K.A."/>
            <person name="Nixon K."/>
            <person name="Nusskern D.R."/>
            <person name="Pacleb J.M."/>
            <person name="Palazzolo M."/>
            <person name="Pittman G.S."/>
            <person name="Pan S."/>
            <person name="Pollard J."/>
            <person name="Puri V."/>
            <person name="Reese M.G."/>
            <person name="Reinert K."/>
            <person name="Remington K."/>
            <person name="Saunders R.D.C."/>
            <person name="Scheeler F."/>
            <person name="Shen H."/>
            <person name="Shue B.C."/>
            <person name="Siden-Kiamos I."/>
            <person name="Simpson M."/>
            <person name="Skupski M.P."/>
            <person name="Smith T.J."/>
            <person name="Spier E."/>
            <person name="Spradling A.C."/>
            <person name="Stapleton M."/>
            <person name="Strong R."/>
            <person name="Sun E."/>
            <person name="Svirskas R."/>
            <person name="Tector C."/>
            <person name="Turner R."/>
            <person name="Venter E."/>
            <person name="Wang A.H."/>
            <person name="Wang X."/>
            <person name="Wang Z.-Y."/>
            <person name="Wassarman D.A."/>
            <person name="Weinstock G.M."/>
            <person name="Weissenbach J."/>
            <person name="Williams S.M."/>
            <person name="Woodage T."/>
            <person name="Worley K.C."/>
            <person name="Wu D."/>
            <person name="Yang S."/>
            <person name="Yao Q.A."/>
            <person name="Ye J."/>
            <person name="Yeh R.-F."/>
            <person name="Zaveri J.S."/>
            <person name="Zhan M."/>
            <person name="Zhang G."/>
            <person name="Zhao Q."/>
            <person name="Zheng L."/>
            <person name="Zheng X.H."/>
            <person name="Zhong F.N."/>
            <person name="Zhong W."/>
            <person name="Zhou X."/>
            <person name="Zhu S.C."/>
            <person name="Zhu X."/>
            <person name="Smith H.O."/>
            <person name="Gibbs R.A."/>
            <person name="Myers E.W."/>
            <person name="Rubin G.M."/>
            <person name="Venter J.C."/>
        </authorList>
    </citation>
    <scope>NUCLEOTIDE SEQUENCE [LARGE SCALE GENOMIC DNA]</scope>
    <source>
        <strain evidence="10">Berkeley</strain>
    </source>
</reference>
<reference evidence="10" key="2">
    <citation type="journal article" date="2002" name="Genome Biol.">
        <title>Annotation of the Drosophila melanogaster euchromatic genome: a systematic review.</title>
        <authorList>
            <person name="Misra S."/>
            <person name="Crosby M.A."/>
            <person name="Mungall C.J."/>
            <person name="Matthews B.B."/>
            <person name="Campbell K.S."/>
            <person name="Hradecky P."/>
            <person name="Huang Y."/>
            <person name="Kaminker J.S."/>
            <person name="Millburn G.H."/>
            <person name="Prochnik S.E."/>
            <person name="Smith C.D."/>
            <person name="Tupy J.L."/>
            <person name="Whitfield E.J."/>
            <person name="Bayraktaroglu L."/>
            <person name="Berman B.P."/>
            <person name="Bettencourt B.R."/>
            <person name="Celniker S.E."/>
            <person name="de Grey A.D.N.J."/>
            <person name="Drysdale R.A."/>
            <person name="Harris N.L."/>
            <person name="Richter J."/>
            <person name="Russo S."/>
            <person name="Schroeder A.J."/>
            <person name="Shu S.Q."/>
            <person name="Stapleton M."/>
            <person name="Yamada C."/>
            <person name="Ashburner M."/>
            <person name="Gelbart W.M."/>
            <person name="Rubin G.M."/>
            <person name="Lewis S.E."/>
        </authorList>
    </citation>
    <scope>GENOME REANNOTATION</scope>
    <source>
        <strain evidence="10">Berkeley</strain>
    </source>
</reference>
<reference evidence="6" key="3">
    <citation type="journal article" date="2000" name="Science">
        <title>A Drosophila complementary DNA resource.</title>
        <authorList>
            <person name="Rubin G.M."/>
            <person name="Hong L."/>
            <person name="Brokstein P."/>
            <person name="Evans-Holm M."/>
            <person name="Frise E."/>
            <person name="Stapleton M."/>
            <person name="Harvey D.A."/>
        </authorList>
    </citation>
    <scope>NUCLEOTIDE SEQUENCE [LARGE SCALE MRNA]</scope>
    <source>
        <strain evidence="6">Berkeley</strain>
        <tissue evidence="6">Head</tissue>
    </source>
</reference>
<reference evidence="7 8" key="4">
    <citation type="submission" date="2009-01" db="EMBL/GenBank/DDBJ databases">
        <authorList>
            <person name="Booth B."/>
            <person name="Stapleton M."/>
            <person name="Brokstein P."/>
            <person name="Hong L."/>
            <person name="Agbayani A."/>
            <person name="Carlson J."/>
            <person name="Champe M."/>
            <person name="Chavez C."/>
            <person name="Dorsett V."/>
            <person name="Dresnek D."/>
            <person name="Farfan D."/>
            <person name="Frise E."/>
            <person name="George R."/>
            <person name="Gonzalez M."/>
            <person name="Guarin H."/>
            <person name="Kronmiller B."/>
            <person name="Li P."/>
            <person name="Liao G."/>
            <person name="Miranda A."/>
            <person name="Mungall C.J."/>
            <person name="Nunoo J."/>
            <person name="Pacleb J."/>
            <person name="Paragas V."/>
            <person name="Park S."/>
            <person name="Patel S."/>
            <person name="Phouanenavong S."/>
            <person name="Wan K."/>
            <person name="Yu C."/>
            <person name="Lewis S.E."/>
            <person name="Rubin G.M."/>
            <person name="Celniker S."/>
        </authorList>
    </citation>
    <scope>NUCLEOTIDE SEQUENCE [LARGE SCALE MRNA]</scope>
    <source>
        <strain evidence="7">Berkeley</strain>
        <tissue evidence="7">Embryo</tissue>
    </source>
</reference>
<reference evidence="4" key="5">
    <citation type="journal article" date="2015" name="Proc. Natl. Acad. Sci. U.S.A.">
        <title>Fly LMBR1/LIMR-type protein Lilipod promotes germ-line stem cell self-renewal by enhancing BMP signaling.</title>
        <authorList>
            <person name="Dolezal D."/>
            <person name="Liu Z."/>
            <person name="Zhou Q."/>
            <person name="Pignoni F."/>
        </authorList>
    </citation>
    <scope>FUNCTION</scope>
    <scope>TISSUE SPECIFICITY</scope>
    <scope>DISRUPTION PHENOTYPE</scope>
</reference>
<evidence type="ECO:0000255" key="1"/>
<evidence type="ECO:0000269" key="2">
    <source>
    </source>
</evidence>
<evidence type="ECO:0000303" key="3">
    <source>
    </source>
</evidence>
<evidence type="ECO:0000305" key="4"/>
<evidence type="ECO:0000305" key="5">
    <source>
    </source>
</evidence>
<evidence type="ECO:0000312" key="6">
    <source>
        <dbReference type="EMBL" id="AAD34745.1"/>
    </source>
</evidence>
<evidence type="ECO:0000312" key="7">
    <source>
        <dbReference type="EMBL" id="AAO24967.1"/>
    </source>
</evidence>
<evidence type="ECO:0000312" key="8">
    <source>
        <dbReference type="EMBL" id="ACM16699.1"/>
    </source>
</evidence>
<evidence type="ECO:0000312" key="9">
    <source>
        <dbReference type="FlyBase" id="FBgn0027539"/>
    </source>
</evidence>
<evidence type="ECO:0000312" key="10">
    <source>
        <dbReference type="Proteomes" id="UP000000803"/>
    </source>
</evidence>
<comment type="function">
    <text evidence="2">Required during oogenesis to promote self-renewal of germline stem cells, probably by enhancing BMP signaling activity.</text>
</comment>
<comment type="subcellular location">
    <subcellularLocation>
        <location evidence="5">Cell membrane</location>
        <topology evidence="1">Multi-pass membrane protein</topology>
    </subcellularLocation>
</comment>
<comment type="tissue specificity">
    <text evidence="2">In the ovary, detected in germline stem cells and their progeny. Also detected in the somatic follicular epithelium.</text>
</comment>
<comment type="disruption phenotype">
    <text evidence="2">Larval lethal. Conditional knockdown in the ovary results in progressive loss of undifferentiated germline stem cells.</text>
</comment>
<comment type="similarity">
    <text evidence="4">Belongs to the LIMR family.</text>
</comment>
<dbReference type="EMBL" id="AE014297">
    <property type="protein sequence ID" value="AAF56340.1"/>
    <property type="molecule type" value="Genomic_DNA"/>
</dbReference>
<dbReference type="EMBL" id="AF132157">
    <property type="protein sequence ID" value="AAD34745.1"/>
    <property type="molecule type" value="mRNA"/>
</dbReference>
<dbReference type="EMBL" id="BT003212">
    <property type="protein sequence ID" value="AAO24967.1"/>
    <property type="molecule type" value="mRNA"/>
</dbReference>
<dbReference type="EMBL" id="BT057989">
    <property type="protein sequence ID" value="ACM16699.1"/>
    <property type="molecule type" value="mRNA"/>
</dbReference>
<dbReference type="RefSeq" id="NP_651290.1">
    <property type="nucleotide sequence ID" value="NM_143033.3"/>
</dbReference>
<dbReference type="SMR" id="Q9VC35"/>
<dbReference type="FunCoup" id="Q9VC35">
    <property type="interactions" value="910"/>
</dbReference>
<dbReference type="IntAct" id="Q9VC35">
    <property type="interactions" value="2"/>
</dbReference>
<dbReference type="STRING" id="7227.FBpp0084114"/>
<dbReference type="PaxDb" id="7227-FBpp0084114"/>
<dbReference type="DNASU" id="42956"/>
<dbReference type="EnsemblMetazoa" id="FBtr0084739">
    <property type="protein sequence ID" value="FBpp0084114"/>
    <property type="gene ID" value="FBgn0027539"/>
</dbReference>
<dbReference type="GeneID" id="42956"/>
<dbReference type="KEGG" id="dme:Dmel_CG5807"/>
<dbReference type="UCSC" id="CG5807-RA">
    <property type="organism name" value="d. melanogaster"/>
</dbReference>
<dbReference type="AGR" id="FB:FBgn0027539"/>
<dbReference type="CTD" id="42956"/>
<dbReference type="FlyBase" id="FBgn0027539">
    <property type="gene designation" value="lili"/>
</dbReference>
<dbReference type="VEuPathDB" id="VectorBase:FBgn0027539"/>
<dbReference type="eggNOG" id="KOG3722">
    <property type="taxonomic scope" value="Eukaryota"/>
</dbReference>
<dbReference type="GeneTree" id="ENSGT00390000007809"/>
<dbReference type="InParanoid" id="Q9VC35"/>
<dbReference type="OMA" id="QQRRTWW"/>
<dbReference type="OrthoDB" id="5596951at2759"/>
<dbReference type="PhylomeDB" id="Q9VC35"/>
<dbReference type="BioGRID-ORCS" id="42956">
    <property type="hits" value="0 hits in 3 CRISPR screens"/>
</dbReference>
<dbReference type="GenomeRNAi" id="42956"/>
<dbReference type="PRO" id="PR:Q9VC35"/>
<dbReference type="Proteomes" id="UP000000803">
    <property type="component" value="Chromosome 3R"/>
</dbReference>
<dbReference type="Bgee" id="FBgn0027539">
    <property type="expression patterns" value="Expressed in dorsal appendage forming follicle cell in ovary and 105 other cell types or tissues"/>
</dbReference>
<dbReference type="ExpressionAtlas" id="Q9VC35">
    <property type="expression patterns" value="baseline and differential"/>
</dbReference>
<dbReference type="GO" id="GO:0005886">
    <property type="term" value="C:plasma membrane"/>
    <property type="evidence" value="ECO:0000250"/>
    <property type="project" value="FlyBase"/>
</dbReference>
<dbReference type="GO" id="GO:0004888">
    <property type="term" value="F:transmembrane signaling receptor activity"/>
    <property type="evidence" value="ECO:0000318"/>
    <property type="project" value="GO_Central"/>
</dbReference>
<dbReference type="GO" id="GO:0036099">
    <property type="term" value="P:female germ-line stem cell population maintenance"/>
    <property type="evidence" value="ECO:0000315"/>
    <property type="project" value="FlyBase"/>
</dbReference>
<dbReference type="GO" id="GO:0048477">
    <property type="term" value="P:oogenesis"/>
    <property type="evidence" value="ECO:0007669"/>
    <property type="project" value="UniProtKB-KW"/>
</dbReference>
<dbReference type="GO" id="GO:0030513">
    <property type="term" value="P:positive regulation of BMP signaling pathway"/>
    <property type="evidence" value="ECO:0000316"/>
    <property type="project" value="FlyBase"/>
</dbReference>
<dbReference type="GO" id="GO:0007165">
    <property type="term" value="P:signal transduction"/>
    <property type="evidence" value="ECO:0000318"/>
    <property type="project" value="GO_Central"/>
</dbReference>
<dbReference type="InterPro" id="IPR008075">
    <property type="entry name" value="LIMR"/>
</dbReference>
<dbReference type="InterPro" id="IPR006876">
    <property type="entry name" value="LMBR1-like_membr_prot"/>
</dbReference>
<dbReference type="PANTHER" id="PTHR12625">
    <property type="entry name" value="LIPOCALIN-1 INTERACTING MEMBRANE RECEPTOR LIMR"/>
    <property type="match status" value="1"/>
</dbReference>
<dbReference type="PANTHER" id="PTHR12625:SF0">
    <property type="entry name" value="PROTEIN LILIPOD"/>
    <property type="match status" value="1"/>
</dbReference>
<dbReference type="Pfam" id="PF04791">
    <property type="entry name" value="LMBR1"/>
    <property type="match status" value="1"/>
</dbReference>
<dbReference type="PRINTS" id="PR01692">
    <property type="entry name" value="LIPOCALINIMR"/>
</dbReference>
<accession>Q9VC35</accession>
<accession>Q86PC4</accession>
<accession>Q9XZ04</accession>
<feature type="chain" id="PRO_0000436844" description="Protein Lilipod">
    <location>
        <begin position="1"/>
        <end position="527"/>
    </location>
</feature>
<feature type="topological domain" description="Extracellular" evidence="4">
    <location>
        <begin position="1"/>
        <end position="22"/>
    </location>
</feature>
<feature type="transmembrane region" description="Helical" evidence="1">
    <location>
        <begin position="23"/>
        <end position="43"/>
    </location>
</feature>
<feature type="topological domain" description="Cytoplasmic" evidence="4">
    <location>
        <begin position="44"/>
        <end position="65"/>
    </location>
</feature>
<feature type="transmembrane region" description="Helical" evidence="1">
    <location>
        <begin position="66"/>
        <end position="86"/>
    </location>
</feature>
<feature type="topological domain" description="Extracellular" evidence="4">
    <location>
        <begin position="87"/>
        <end position="117"/>
    </location>
</feature>
<feature type="transmembrane region" description="Helical" evidence="1">
    <location>
        <begin position="118"/>
        <end position="138"/>
    </location>
</feature>
<feature type="topological domain" description="Cytoplasmic" evidence="4">
    <location>
        <begin position="139"/>
        <end position="160"/>
    </location>
</feature>
<feature type="transmembrane region" description="Helical" evidence="1">
    <location>
        <begin position="161"/>
        <end position="181"/>
    </location>
</feature>
<feature type="topological domain" description="Extracellular" evidence="4">
    <location>
        <begin position="182"/>
        <end position="194"/>
    </location>
</feature>
<feature type="transmembrane region" description="Helical" evidence="1">
    <location>
        <begin position="195"/>
        <end position="215"/>
    </location>
</feature>
<feature type="topological domain" description="Cytoplasmic" evidence="4">
    <location>
        <begin position="216"/>
        <end position="341"/>
    </location>
</feature>
<feature type="transmembrane region" description="Helical" evidence="1">
    <location>
        <begin position="342"/>
        <end position="362"/>
    </location>
</feature>
<feature type="topological domain" description="Extracellular" evidence="4">
    <location>
        <begin position="363"/>
        <end position="395"/>
    </location>
</feature>
<feature type="transmembrane region" description="Helical" evidence="1">
    <location>
        <begin position="396"/>
        <end position="416"/>
    </location>
</feature>
<feature type="topological domain" description="Cytoplasmic" evidence="4">
    <location>
        <begin position="417"/>
        <end position="433"/>
    </location>
</feature>
<feature type="transmembrane region" description="Helical" evidence="1">
    <location>
        <begin position="434"/>
        <end position="454"/>
    </location>
</feature>
<feature type="topological domain" description="Extracellular" evidence="4">
    <location>
        <begin position="455"/>
        <end position="468"/>
    </location>
</feature>
<feature type="transmembrane region" description="Helical" evidence="1">
    <location>
        <begin position="469"/>
        <end position="489"/>
    </location>
</feature>
<feature type="topological domain" description="Cytoplasmic" evidence="4">
    <location>
        <begin position="490"/>
        <end position="527"/>
    </location>
</feature>
<feature type="sequence conflict" description="In Ref. 4; AAO24967." evidence="4" ref="4">
    <original>F</original>
    <variation>S</variation>
    <location>
        <position position="199"/>
    </location>
</feature>
<feature type="sequence conflict" description="In Ref. 3; AAD34745." evidence="4" ref="3">
    <original>C</original>
    <variation>R</variation>
    <location>
        <position position="403"/>
    </location>
</feature>
<feature type="sequence conflict" description="In Ref. 3; AAD34745." evidence="4" ref="3">
    <original>D</original>
    <variation>E</variation>
    <location>
        <position position="468"/>
    </location>
</feature>